<dbReference type="EC" id="6.1.1.5" evidence="1"/>
<dbReference type="EMBL" id="AP006618">
    <property type="protein sequence ID" value="BAD56622.1"/>
    <property type="molecule type" value="Genomic_DNA"/>
</dbReference>
<dbReference type="RefSeq" id="WP_011208307.1">
    <property type="nucleotide sequence ID" value="NC_006361.1"/>
</dbReference>
<dbReference type="SMR" id="Q5YYW9"/>
<dbReference type="STRING" id="247156.NFA_17760"/>
<dbReference type="GeneID" id="61132557"/>
<dbReference type="KEGG" id="nfa:NFA_17760"/>
<dbReference type="eggNOG" id="COG0060">
    <property type="taxonomic scope" value="Bacteria"/>
</dbReference>
<dbReference type="HOGENOM" id="CLU_001493_1_1_11"/>
<dbReference type="OrthoDB" id="9810365at2"/>
<dbReference type="Proteomes" id="UP000006820">
    <property type="component" value="Chromosome"/>
</dbReference>
<dbReference type="GO" id="GO:0005737">
    <property type="term" value="C:cytoplasm"/>
    <property type="evidence" value="ECO:0007669"/>
    <property type="project" value="UniProtKB-SubCell"/>
</dbReference>
<dbReference type="GO" id="GO:0002161">
    <property type="term" value="F:aminoacyl-tRNA deacylase activity"/>
    <property type="evidence" value="ECO:0007669"/>
    <property type="project" value="InterPro"/>
</dbReference>
<dbReference type="GO" id="GO:0005524">
    <property type="term" value="F:ATP binding"/>
    <property type="evidence" value="ECO:0007669"/>
    <property type="project" value="UniProtKB-UniRule"/>
</dbReference>
<dbReference type="GO" id="GO:0004822">
    <property type="term" value="F:isoleucine-tRNA ligase activity"/>
    <property type="evidence" value="ECO:0007669"/>
    <property type="project" value="UniProtKB-UniRule"/>
</dbReference>
<dbReference type="GO" id="GO:0000049">
    <property type="term" value="F:tRNA binding"/>
    <property type="evidence" value="ECO:0007669"/>
    <property type="project" value="InterPro"/>
</dbReference>
<dbReference type="GO" id="GO:0008270">
    <property type="term" value="F:zinc ion binding"/>
    <property type="evidence" value="ECO:0007669"/>
    <property type="project" value="UniProtKB-UniRule"/>
</dbReference>
<dbReference type="GO" id="GO:0006428">
    <property type="term" value="P:isoleucyl-tRNA aminoacylation"/>
    <property type="evidence" value="ECO:0007669"/>
    <property type="project" value="UniProtKB-UniRule"/>
</dbReference>
<dbReference type="CDD" id="cd07961">
    <property type="entry name" value="Anticodon_Ia_Ile_ABEc"/>
    <property type="match status" value="1"/>
</dbReference>
<dbReference type="CDD" id="cd00818">
    <property type="entry name" value="IleRS_core"/>
    <property type="match status" value="1"/>
</dbReference>
<dbReference type="FunFam" id="3.40.50.620:FF:000063">
    <property type="entry name" value="Isoleucine--tRNA ligase"/>
    <property type="match status" value="1"/>
</dbReference>
<dbReference type="FunFam" id="3.40.50.620:FF:000075">
    <property type="entry name" value="Isoleucine--tRNA ligase"/>
    <property type="match status" value="1"/>
</dbReference>
<dbReference type="Gene3D" id="3.40.50.620">
    <property type="entry name" value="HUPs"/>
    <property type="match status" value="2"/>
</dbReference>
<dbReference type="Gene3D" id="1.10.730.10">
    <property type="entry name" value="Isoleucyl-tRNA Synthetase, Domain 1"/>
    <property type="match status" value="1"/>
</dbReference>
<dbReference type="HAMAP" id="MF_02003">
    <property type="entry name" value="Ile_tRNA_synth_type2"/>
    <property type="match status" value="1"/>
</dbReference>
<dbReference type="InterPro" id="IPR001412">
    <property type="entry name" value="aa-tRNA-synth_I_CS"/>
</dbReference>
<dbReference type="InterPro" id="IPR002300">
    <property type="entry name" value="aa-tRNA-synth_Ia"/>
</dbReference>
<dbReference type="InterPro" id="IPR033709">
    <property type="entry name" value="Anticodon_Ile_ABEc"/>
</dbReference>
<dbReference type="InterPro" id="IPR002301">
    <property type="entry name" value="Ile-tRNA-ligase"/>
</dbReference>
<dbReference type="InterPro" id="IPR023586">
    <property type="entry name" value="Ile-tRNA-ligase_type2"/>
</dbReference>
<dbReference type="InterPro" id="IPR013155">
    <property type="entry name" value="M/V/L/I-tRNA-synth_anticd-bd"/>
</dbReference>
<dbReference type="InterPro" id="IPR014729">
    <property type="entry name" value="Rossmann-like_a/b/a_fold"/>
</dbReference>
<dbReference type="InterPro" id="IPR009080">
    <property type="entry name" value="tRNAsynth_Ia_anticodon-bd"/>
</dbReference>
<dbReference type="InterPro" id="IPR009008">
    <property type="entry name" value="Val/Leu/Ile-tRNA-synth_edit"/>
</dbReference>
<dbReference type="NCBIfam" id="TIGR00392">
    <property type="entry name" value="ileS"/>
    <property type="match status" value="1"/>
</dbReference>
<dbReference type="PANTHER" id="PTHR42780:SF1">
    <property type="entry name" value="ISOLEUCINE--TRNA LIGASE, CYTOPLASMIC"/>
    <property type="match status" value="1"/>
</dbReference>
<dbReference type="PANTHER" id="PTHR42780">
    <property type="entry name" value="SOLEUCYL-TRNA SYNTHETASE"/>
    <property type="match status" value="1"/>
</dbReference>
<dbReference type="Pfam" id="PF08264">
    <property type="entry name" value="Anticodon_1"/>
    <property type="match status" value="1"/>
</dbReference>
<dbReference type="Pfam" id="PF19302">
    <property type="entry name" value="DUF5915"/>
    <property type="match status" value="1"/>
</dbReference>
<dbReference type="Pfam" id="PF00133">
    <property type="entry name" value="tRNA-synt_1"/>
    <property type="match status" value="1"/>
</dbReference>
<dbReference type="PRINTS" id="PR00984">
    <property type="entry name" value="TRNASYNTHILE"/>
</dbReference>
<dbReference type="SUPFAM" id="SSF47323">
    <property type="entry name" value="Anticodon-binding domain of a subclass of class I aminoacyl-tRNA synthetases"/>
    <property type="match status" value="2"/>
</dbReference>
<dbReference type="SUPFAM" id="SSF52374">
    <property type="entry name" value="Nucleotidylyl transferase"/>
    <property type="match status" value="1"/>
</dbReference>
<dbReference type="SUPFAM" id="SSF50677">
    <property type="entry name" value="ValRS/IleRS/LeuRS editing domain"/>
    <property type="match status" value="1"/>
</dbReference>
<dbReference type="PROSITE" id="PS00178">
    <property type="entry name" value="AA_TRNA_LIGASE_I"/>
    <property type="match status" value="1"/>
</dbReference>
<gene>
    <name evidence="1" type="primary">ileS</name>
    <name type="ordered locus">NFA_17760</name>
</gene>
<comment type="function">
    <text evidence="1">Catalyzes the attachment of isoleucine to tRNA(Ile). As IleRS can inadvertently accommodate and process structurally similar amino acids such as valine, to avoid such errors it has two additional distinct tRNA(Ile)-dependent editing activities. One activity is designated as 'pretransfer' editing and involves the hydrolysis of activated Val-AMP. The other activity is designated 'posttransfer' editing and involves deacylation of mischarged Val-tRNA(Ile).</text>
</comment>
<comment type="catalytic activity">
    <reaction evidence="1">
        <text>tRNA(Ile) + L-isoleucine + ATP = L-isoleucyl-tRNA(Ile) + AMP + diphosphate</text>
        <dbReference type="Rhea" id="RHEA:11060"/>
        <dbReference type="Rhea" id="RHEA-COMP:9666"/>
        <dbReference type="Rhea" id="RHEA-COMP:9695"/>
        <dbReference type="ChEBI" id="CHEBI:30616"/>
        <dbReference type="ChEBI" id="CHEBI:33019"/>
        <dbReference type="ChEBI" id="CHEBI:58045"/>
        <dbReference type="ChEBI" id="CHEBI:78442"/>
        <dbReference type="ChEBI" id="CHEBI:78528"/>
        <dbReference type="ChEBI" id="CHEBI:456215"/>
        <dbReference type="EC" id="6.1.1.5"/>
    </reaction>
</comment>
<comment type="cofactor">
    <cofactor evidence="1">
        <name>Zn(2+)</name>
        <dbReference type="ChEBI" id="CHEBI:29105"/>
    </cofactor>
</comment>
<comment type="subunit">
    <text evidence="1">Monomer.</text>
</comment>
<comment type="subcellular location">
    <subcellularLocation>
        <location evidence="1">Cytoplasm</location>
    </subcellularLocation>
</comment>
<comment type="domain">
    <text evidence="1">IleRS has two distinct active sites: one for aminoacylation and one for editing. The misactivated valine is translocated from the active site to the editing site, which sterically excludes the correctly activated isoleucine. The single editing site contains two valyl binding pockets, one specific for each substrate (Val-AMP or Val-tRNA(Ile)).</text>
</comment>
<comment type="similarity">
    <text evidence="1">Belongs to the class-I aminoacyl-tRNA synthetase family. IleS type 2 subfamily.</text>
</comment>
<keyword id="KW-0030">Aminoacyl-tRNA synthetase</keyword>
<keyword id="KW-0067">ATP-binding</keyword>
<keyword id="KW-0963">Cytoplasm</keyword>
<keyword id="KW-0436">Ligase</keyword>
<keyword id="KW-0479">Metal-binding</keyword>
<keyword id="KW-0547">Nucleotide-binding</keyword>
<keyword id="KW-0648">Protein biosynthesis</keyword>
<keyword id="KW-1185">Reference proteome</keyword>
<keyword id="KW-0862">Zinc</keyword>
<reference key="1">
    <citation type="journal article" date="2004" name="Proc. Natl. Acad. Sci. U.S.A.">
        <title>The complete genomic sequence of Nocardia farcinica IFM 10152.</title>
        <authorList>
            <person name="Ishikawa J."/>
            <person name="Yamashita A."/>
            <person name="Mikami Y."/>
            <person name="Hoshino Y."/>
            <person name="Kurita H."/>
            <person name="Hotta K."/>
            <person name="Shiba T."/>
            <person name="Hattori M."/>
        </authorList>
    </citation>
    <scope>NUCLEOTIDE SEQUENCE [LARGE SCALE GENOMIC DNA]</scope>
    <source>
        <strain>IFM 10152</strain>
    </source>
</reference>
<sequence>MADDSNSAYPRVDYGAGTGAAFPDLERRVLEAWAADDTFRASIENRSGAAEFVFYDGPPFANGLPHYGHLLTGYVKDVIPRFQTMRGKRVDRRFGWDCHGLPAEIEAEKQLGITDKSQIDAMGLAEFNAACKSSVLRYTGEWRDYVTRQARWVDFDNDYKTLDLDFMESVMWAFKSLYDKGLIYQGFRVLPYSWYEQTPLSNQETRLDDAYKMRQDPAVTVDMVLSVPGEHPLRELDGANALIWTTTPWTLPSNLAIAVHPDVRYVHLRAADGTRYVLAAERVSHYSREFGEDATVLAEFEGAALVGLSYRPPFDFFLGHPNAHRVLAADYVTTDSGTGVVHMAPAFGEEDMEVCSANDIELVQPLDPGGRFTSMVPPYEGLMVFDANPVIIKDLKAAGKLLRHETIEHSYPHSWRSGQPLIYMAVPSWFVAVTKFRDRMVELNKQITWVPEHIRDGQFGKWLEGARDWNISRNRYWGSPIPVWVSDDPAYPRVDVYGSLEELERDFGVRPTDLHRPAIDQLTRPNPDDPTGRSMMRRVPEVLDCWFESGSMPYAQVHYPFENKEWFDSHFPGDFIVEYNGQTRGWFYTLHVLATALFDSPAFKTVAAHGIVLGDDGLKMSKSKGNYPDVNEVFDRDGSDAMRWFLMSSPILRGGNLIVTERGIREGVSHALRPLWNAWTFLQLYASKPGEWRTDSTHVLDRYILAKLAQTRDGMTEALEVYDIAGACEELRTFADALTNWYVRRSRSRFWSEDRDAVDTLHTVLEVATRLAAPLLPLISEVIWRGLTGGRSVHLADWPAAADLPADPELVSTMDEVRTVCSTVLSLRKAKNLRVRLPLAEVTIAAPDAERLAPYADIVADEVNVKKVDLTTDVAVHGRFELAVNARAAGPRLGKDVQRVIKAVKAGDWTESADGVVSAAGITLLPEEYTQRLVAAEPESTAALPGNAGLVVLDSVVTEELEAEGWARDLVRELQETRKSLGLDVSDRIHVVLEVPEARRSWAQTHRDLIAGEILATSLEFGTAGEPAAELAGGVRASVRKA</sequence>
<name>SYI_NOCFA</name>
<proteinExistence type="inferred from homology"/>
<evidence type="ECO:0000255" key="1">
    <source>
        <dbReference type="HAMAP-Rule" id="MF_02003"/>
    </source>
</evidence>
<accession>Q5YYW9</accession>
<organism>
    <name type="scientific">Nocardia farcinica (strain IFM 10152)</name>
    <dbReference type="NCBI Taxonomy" id="247156"/>
    <lineage>
        <taxon>Bacteria</taxon>
        <taxon>Bacillati</taxon>
        <taxon>Actinomycetota</taxon>
        <taxon>Actinomycetes</taxon>
        <taxon>Mycobacteriales</taxon>
        <taxon>Nocardiaceae</taxon>
        <taxon>Nocardia</taxon>
    </lineage>
</organism>
<protein>
    <recommendedName>
        <fullName evidence="1">Isoleucine--tRNA ligase</fullName>
        <ecNumber evidence="1">6.1.1.5</ecNumber>
    </recommendedName>
    <alternativeName>
        <fullName evidence="1">Isoleucyl-tRNA synthetase</fullName>
        <shortName evidence="1">IleRS</shortName>
    </alternativeName>
</protein>
<feature type="chain" id="PRO_0000098551" description="Isoleucine--tRNA ligase">
    <location>
        <begin position="1"/>
        <end position="1042"/>
    </location>
</feature>
<feature type="short sequence motif" description="'HIGH' region">
    <location>
        <begin position="59"/>
        <end position="69"/>
    </location>
</feature>
<feature type="short sequence motif" description="'KMSKS' region">
    <location>
        <begin position="619"/>
        <end position="623"/>
    </location>
</feature>
<feature type="binding site" evidence="1">
    <location>
        <position position="622"/>
    </location>
    <ligand>
        <name>ATP</name>
        <dbReference type="ChEBI" id="CHEBI:30616"/>
    </ligand>
</feature>